<gene>
    <name evidence="1" type="primary">thiL</name>
    <name type="ordered locus">RB6809</name>
</gene>
<comment type="function">
    <text evidence="1">Catalyzes the ATP-dependent phosphorylation of thiamine-monophosphate (TMP) to form thiamine-pyrophosphate (TPP), the active form of vitamin B1.</text>
</comment>
<comment type="catalytic activity">
    <reaction evidence="1">
        <text>thiamine phosphate + ATP = thiamine diphosphate + ADP</text>
        <dbReference type="Rhea" id="RHEA:15913"/>
        <dbReference type="ChEBI" id="CHEBI:30616"/>
        <dbReference type="ChEBI" id="CHEBI:37575"/>
        <dbReference type="ChEBI" id="CHEBI:58937"/>
        <dbReference type="ChEBI" id="CHEBI:456216"/>
        <dbReference type="EC" id="2.7.4.16"/>
    </reaction>
</comment>
<comment type="pathway">
    <text evidence="1">Cofactor biosynthesis; thiamine diphosphate biosynthesis; thiamine diphosphate from thiamine phosphate: step 1/1.</text>
</comment>
<comment type="miscellaneous">
    <text evidence="1">Reaction mechanism of ThiL seems to utilize a direct, inline transfer of the gamma-phosphate of ATP to TMP rather than a phosphorylated enzyme intermediate.</text>
</comment>
<comment type="similarity">
    <text evidence="1">Belongs to the thiamine-monophosphate kinase family.</text>
</comment>
<protein>
    <recommendedName>
        <fullName evidence="1">Thiamine-monophosphate kinase</fullName>
        <shortName evidence="1">TMP kinase</shortName>
        <shortName evidence="1">Thiamine-phosphate kinase</shortName>
        <ecNumber evidence="1">2.7.4.16</ecNumber>
    </recommendedName>
</protein>
<feature type="chain" id="PRO_0000415644" description="Thiamine-monophosphate kinase">
    <location>
        <begin position="1"/>
        <end position="316"/>
    </location>
</feature>
<feature type="binding site" evidence="1">
    <location>
        <position position="26"/>
    </location>
    <ligand>
        <name>Mg(2+)</name>
        <dbReference type="ChEBI" id="CHEBI:18420"/>
        <label>3</label>
    </ligand>
</feature>
<feature type="binding site" evidence="1">
    <location>
        <position position="26"/>
    </location>
    <ligand>
        <name>Mg(2+)</name>
        <dbReference type="ChEBI" id="CHEBI:18420"/>
        <label>4</label>
    </ligand>
</feature>
<feature type="binding site" evidence="1">
    <location>
        <position position="49"/>
    </location>
    <ligand>
        <name>Mg(2+)</name>
        <dbReference type="ChEBI" id="CHEBI:18420"/>
        <label>1</label>
    </ligand>
</feature>
<feature type="binding site" evidence="1">
    <location>
        <position position="50"/>
    </location>
    <ligand>
        <name>Mg(2+)</name>
        <dbReference type="ChEBI" id="CHEBI:18420"/>
        <label>1</label>
    </ligand>
</feature>
<feature type="binding site" evidence="1">
    <location>
        <position position="50"/>
    </location>
    <ligand>
        <name>Mg(2+)</name>
        <dbReference type="ChEBI" id="CHEBI:18420"/>
        <label>2</label>
    </ligand>
</feature>
<feature type="binding site" evidence="1">
    <location>
        <position position="57"/>
    </location>
    <ligand>
        <name>substrate</name>
    </ligand>
</feature>
<feature type="binding site" evidence="1">
    <location>
        <position position="79"/>
    </location>
    <ligand>
        <name>Mg(2+)</name>
        <dbReference type="ChEBI" id="CHEBI:18420"/>
        <label>2</label>
    </ligand>
</feature>
<feature type="binding site" evidence="1">
    <location>
        <position position="79"/>
    </location>
    <ligand>
        <name>Mg(2+)</name>
        <dbReference type="ChEBI" id="CHEBI:18420"/>
        <label>3</label>
    </ligand>
</feature>
<feature type="binding site" evidence="1">
    <location>
        <position position="79"/>
    </location>
    <ligand>
        <name>Mg(2+)</name>
        <dbReference type="ChEBI" id="CHEBI:18420"/>
        <label>4</label>
    </ligand>
</feature>
<feature type="binding site" evidence="1">
    <location>
        <position position="109"/>
    </location>
    <ligand>
        <name>ATP</name>
        <dbReference type="ChEBI" id="CHEBI:30616"/>
    </ligand>
</feature>
<feature type="binding site" evidence="1">
    <location>
        <begin position="126"/>
        <end position="127"/>
    </location>
    <ligand>
        <name>ATP</name>
        <dbReference type="ChEBI" id="CHEBI:30616"/>
    </ligand>
</feature>
<feature type="binding site" evidence="1">
    <location>
        <position position="127"/>
    </location>
    <ligand>
        <name>Mg(2+)</name>
        <dbReference type="ChEBI" id="CHEBI:18420"/>
        <label>1</label>
    </ligand>
</feature>
<feature type="binding site" evidence="1">
    <location>
        <position position="151"/>
    </location>
    <ligand>
        <name>ATP</name>
        <dbReference type="ChEBI" id="CHEBI:30616"/>
    </ligand>
</feature>
<feature type="binding site" evidence="1">
    <location>
        <position position="198"/>
    </location>
    <ligand>
        <name>Mg(2+)</name>
        <dbReference type="ChEBI" id="CHEBI:18420"/>
        <label>3</label>
    </ligand>
</feature>
<feature type="binding site" evidence="1">
    <location>
        <position position="200"/>
    </location>
    <ligand>
        <name>ATP</name>
        <dbReference type="ChEBI" id="CHEBI:30616"/>
    </ligand>
</feature>
<feature type="binding site" evidence="1">
    <location>
        <position position="201"/>
    </location>
    <ligand>
        <name>Mg(2+)</name>
        <dbReference type="ChEBI" id="CHEBI:18420"/>
        <label>5</label>
    </ligand>
</feature>
<feature type="binding site" evidence="1">
    <location>
        <position position="251"/>
    </location>
    <ligand>
        <name>substrate</name>
    </ligand>
</feature>
<feature type="binding site" evidence="1">
    <location>
        <position position="305"/>
    </location>
    <ligand>
        <name>substrate</name>
    </ligand>
</feature>
<reference key="1">
    <citation type="journal article" date="2003" name="Proc. Natl. Acad. Sci. U.S.A.">
        <title>Complete genome sequence of the marine planctomycete Pirellula sp. strain 1.</title>
        <authorList>
            <person name="Gloeckner F.O."/>
            <person name="Kube M."/>
            <person name="Bauer M."/>
            <person name="Teeling H."/>
            <person name="Lombardot T."/>
            <person name="Ludwig W."/>
            <person name="Gade D."/>
            <person name="Beck A."/>
            <person name="Borzym K."/>
            <person name="Heitmann K."/>
            <person name="Rabus R."/>
            <person name="Schlesner H."/>
            <person name="Amann R."/>
            <person name="Reinhardt R."/>
        </authorList>
    </citation>
    <scope>NUCLEOTIDE SEQUENCE [LARGE SCALE GENOMIC DNA]</scope>
    <source>
        <strain>DSM 10527 / NCIMB 13988 / SH1</strain>
    </source>
</reference>
<evidence type="ECO:0000255" key="1">
    <source>
        <dbReference type="HAMAP-Rule" id="MF_02128"/>
    </source>
</evidence>
<organism>
    <name type="scientific">Rhodopirellula baltica (strain DSM 10527 / NCIMB 13988 / SH1)</name>
    <dbReference type="NCBI Taxonomy" id="243090"/>
    <lineage>
        <taxon>Bacteria</taxon>
        <taxon>Pseudomonadati</taxon>
        <taxon>Planctomycetota</taxon>
        <taxon>Planctomycetia</taxon>
        <taxon>Pirellulales</taxon>
        <taxon>Pirellulaceae</taxon>
        <taxon>Rhodopirellula</taxon>
    </lineage>
</organism>
<name>THIL_RHOBA</name>
<proteinExistence type="inferred from homology"/>
<accession>Q7UPP0</accession>
<sequence length="316" mass="33792">MEQSFLAYLRGRTRQLPQVAVGIGDDAAVIDWPGSVSSDQPQLRQVACTDQILDGVDFRSEEQSLSDIGFKAMAINLSDIAAMGATPSSALVTLALPAENATEIAGEVYEGILEAAQKYQVAIAGGDLSTYDGPLSISITILGWTEQPWLRTGAEEGDALFVTGALGGSLLGRHLRPEPRVELAAKLKQTVNVHAAIDVSDGFSLDLDRMLAASRMGAELELETLPISEAAHQFAEKSGRTPLEHAWSDGEDFELIFCVAPEEAAIIESTDWGVPVTRVGKVVGRTGLWKRVATSKFERVFPQGFVHGETDVAAAN</sequence>
<dbReference type="EC" id="2.7.4.16" evidence="1"/>
<dbReference type="EMBL" id="BX294144">
    <property type="protein sequence ID" value="CAD75021.1"/>
    <property type="molecule type" value="Genomic_DNA"/>
</dbReference>
<dbReference type="RefSeq" id="NP_867475.1">
    <property type="nucleotide sequence ID" value="NC_005027.1"/>
</dbReference>
<dbReference type="RefSeq" id="WP_011121111.1">
    <property type="nucleotide sequence ID" value="NC_005027.1"/>
</dbReference>
<dbReference type="SMR" id="Q7UPP0"/>
<dbReference type="FunCoup" id="Q7UPP0">
    <property type="interactions" value="339"/>
</dbReference>
<dbReference type="STRING" id="243090.RB6809"/>
<dbReference type="EnsemblBacteria" id="CAD75021">
    <property type="protein sequence ID" value="CAD75021"/>
    <property type="gene ID" value="RB6809"/>
</dbReference>
<dbReference type="KEGG" id="rba:RB6809"/>
<dbReference type="PATRIC" id="fig|243090.15.peg.3302"/>
<dbReference type="eggNOG" id="COG0611">
    <property type="taxonomic scope" value="Bacteria"/>
</dbReference>
<dbReference type="HOGENOM" id="CLU_046964_1_1_0"/>
<dbReference type="InParanoid" id="Q7UPP0"/>
<dbReference type="OrthoDB" id="9802811at2"/>
<dbReference type="UniPathway" id="UPA00060">
    <property type="reaction ID" value="UER00142"/>
</dbReference>
<dbReference type="Proteomes" id="UP000001025">
    <property type="component" value="Chromosome"/>
</dbReference>
<dbReference type="GO" id="GO:0005524">
    <property type="term" value="F:ATP binding"/>
    <property type="evidence" value="ECO:0007669"/>
    <property type="project" value="UniProtKB-UniRule"/>
</dbReference>
<dbReference type="GO" id="GO:0000287">
    <property type="term" value="F:magnesium ion binding"/>
    <property type="evidence" value="ECO:0007669"/>
    <property type="project" value="UniProtKB-UniRule"/>
</dbReference>
<dbReference type="GO" id="GO:0009030">
    <property type="term" value="F:thiamine-phosphate kinase activity"/>
    <property type="evidence" value="ECO:0000318"/>
    <property type="project" value="GO_Central"/>
</dbReference>
<dbReference type="GO" id="GO:0009228">
    <property type="term" value="P:thiamine biosynthetic process"/>
    <property type="evidence" value="ECO:0000318"/>
    <property type="project" value="GO_Central"/>
</dbReference>
<dbReference type="GO" id="GO:0009229">
    <property type="term" value="P:thiamine diphosphate biosynthetic process"/>
    <property type="evidence" value="ECO:0000318"/>
    <property type="project" value="GO_Central"/>
</dbReference>
<dbReference type="CDD" id="cd02194">
    <property type="entry name" value="ThiL"/>
    <property type="match status" value="1"/>
</dbReference>
<dbReference type="Gene3D" id="3.90.650.10">
    <property type="entry name" value="PurM-like C-terminal domain"/>
    <property type="match status" value="1"/>
</dbReference>
<dbReference type="Gene3D" id="3.30.1330.10">
    <property type="entry name" value="PurM-like, N-terminal domain"/>
    <property type="match status" value="1"/>
</dbReference>
<dbReference type="HAMAP" id="MF_02128">
    <property type="entry name" value="TMP_kinase"/>
    <property type="match status" value="1"/>
</dbReference>
<dbReference type="InterPro" id="IPR010918">
    <property type="entry name" value="PurM-like_C_dom"/>
</dbReference>
<dbReference type="InterPro" id="IPR036676">
    <property type="entry name" value="PurM-like_C_sf"/>
</dbReference>
<dbReference type="InterPro" id="IPR016188">
    <property type="entry name" value="PurM-like_N"/>
</dbReference>
<dbReference type="InterPro" id="IPR036921">
    <property type="entry name" value="PurM-like_N_sf"/>
</dbReference>
<dbReference type="InterPro" id="IPR006283">
    <property type="entry name" value="ThiL-like"/>
</dbReference>
<dbReference type="NCBIfam" id="TIGR01379">
    <property type="entry name" value="thiL"/>
    <property type="match status" value="1"/>
</dbReference>
<dbReference type="PANTHER" id="PTHR30270">
    <property type="entry name" value="THIAMINE-MONOPHOSPHATE KINASE"/>
    <property type="match status" value="1"/>
</dbReference>
<dbReference type="PANTHER" id="PTHR30270:SF0">
    <property type="entry name" value="THIAMINE-MONOPHOSPHATE KINASE"/>
    <property type="match status" value="1"/>
</dbReference>
<dbReference type="Pfam" id="PF00586">
    <property type="entry name" value="AIRS"/>
    <property type="match status" value="1"/>
</dbReference>
<dbReference type="Pfam" id="PF02769">
    <property type="entry name" value="AIRS_C"/>
    <property type="match status" value="1"/>
</dbReference>
<dbReference type="PIRSF" id="PIRSF005303">
    <property type="entry name" value="Thiam_monoph_kin"/>
    <property type="match status" value="1"/>
</dbReference>
<dbReference type="SUPFAM" id="SSF56042">
    <property type="entry name" value="PurM C-terminal domain-like"/>
    <property type="match status" value="1"/>
</dbReference>
<dbReference type="SUPFAM" id="SSF55326">
    <property type="entry name" value="PurM N-terminal domain-like"/>
    <property type="match status" value="1"/>
</dbReference>
<keyword id="KW-0067">ATP-binding</keyword>
<keyword id="KW-0418">Kinase</keyword>
<keyword id="KW-0460">Magnesium</keyword>
<keyword id="KW-0479">Metal-binding</keyword>
<keyword id="KW-0547">Nucleotide-binding</keyword>
<keyword id="KW-1185">Reference proteome</keyword>
<keyword id="KW-0784">Thiamine biosynthesis</keyword>
<keyword id="KW-0808">Transferase</keyword>